<dbReference type="EC" id="2.7.7.72" evidence="1"/>
<dbReference type="EC" id="3.1.3.-" evidence="1"/>
<dbReference type="EC" id="3.1.4.-" evidence="1"/>
<dbReference type="EMBL" id="CP000089">
    <property type="protein sequence ID" value="AAZ48861.1"/>
    <property type="molecule type" value="Genomic_DNA"/>
</dbReference>
<dbReference type="SMR" id="Q477X0"/>
<dbReference type="STRING" id="159087.Daro_4135"/>
<dbReference type="KEGG" id="dar:Daro_4135"/>
<dbReference type="eggNOG" id="COG0617">
    <property type="taxonomic scope" value="Bacteria"/>
</dbReference>
<dbReference type="HOGENOM" id="CLU_015961_1_1_4"/>
<dbReference type="OrthoDB" id="9805698at2"/>
<dbReference type="GO" id="GO:0005524">
    <property type="term" value="F:ATP binding"/>
    <property type="evidence" value="ECO:0007669"/>
    <property type="project" value="UniProtKB-UniRule"/>
</dbReference>
<dbReference type="GO" id="GO:0004810">
    <property type="term" value="F:CCA tRNA nucleotidyltransferase activity"/>
    <property type="evidence" value="ECO:0007669"/>
    <property type="project" value="UniProtKB-UniRule"/>
</dbReference>
<dbReference type="GO" id="GO:0004112">
    <property type="term" value="F:cyclic-nucleotide phosphodiesterase activity"/>
    <property type="evidence" value="ECO:0007669"/>
    <property type="project" value="UniProtKB-UniRule"/>
</dbReference>
<dbReference type="GO" id="GO:0000287">
    <property type="term" value="F:magnesium ion binding"/>
    <property type="evidence" value="ECO:0007669"/>
    <property type="project" value="UniProtKB-UniRule"/>
</dbReference>
<dbReference type="GO" id="GO:0016791">
    <property type="term" value="F:phosphatase activity"/>
    <property type="evidence" value="ECO:0007669"/>
    <property type="project" value="UniProtKB-UniRule"/>
</dbReference>
<dbReference type="GO" id="GO:0000049">
    <property type="term" value="F:tRNA binding"/>
    <property type="evidence" value="ECO:0007669"/>
    <property type="project" value="UniProtKB-UniRule"/>
</dbReference>
<dbReference type="GO" id="GO:0042245">
    <property type="term" value="P:RNA repair"/>
    <property type="evidence" value="ECO:0007669"/>
    <property type="project" value="UniProtKB-KW"/>
</dbReference>
<dbReference type="GO" id="GO:0001680">
    <property type="term" value="P:tRNA 3'-terminal CCA addition"/>
    <property type="evidence" value="ECO:0007669"/>
    <property type="project" value="UniProtKB-UniRule"/>
</dbReference>
<dbReference type="CDD" id="cd05398">
    <property type="entry name" value="NT_ClassII-CCAase"/>
    <property type="match status" value="1"/>
</dbReference>
<dbReference type="Gene3D" id="3.30.460.10">
    <property type="entry name" value="Beta Polymerase, domain 2"/>
    <property type="match status" value="1"/>
</dbReference>
<dbReference type="Gene3D" id="1.10.3090.10">
    <property type="entry name" value="cca-adding enzyme, domain 2"/>
    <property type="match status" value="1"/>
</dbReference>
<dbReference type="HAMAP" id="MF_01261">
    <property type="entry name" value="CCA_bact_type1"/>
    <property type="match status" value="1"/>
</dbReference>
<dbReference type="HAMAP" id="MF_01262">
    <property type="entry name" value="CCA_bact_type2"/>
    <property type="match status" value="1"/>
</dbReference>
<dbReference type="InterPro" id="IPR012006">
    <property type="entry name" value="CCA_bact"/>
</dbReference>
<dbReference type="InterPro" id="IPR006674">
    <property type="entry name" value="HD_domain"/>
</dbReference>
<dbReference type="InterPro" id="IPR043519">
    <property type="entry name" value="NT_sf"/>
</dbReference>
<dbReference type="InterPro" id="IPR002646">
    <property type="entry name" value="PolA_pol_head_dom"/>
</dbReference>
<dbReference type="InterPro" id="IPR032828">
    <property type="entry name" value="PolyA_RNA-bd"/>
</dbReference>
<dbReference type="InterPro" id="IPR050124">
    <property type="entry name" value="tRNA_CCA-adding_enzyme"/>
</dbReference>
<dbReference type="NCBIfam" id="NF008137">
    <property type="entry name" value="PRK10885.1"/>
    <property type="match status" value="1"/>
</dbReference>
<dbReference type="PANTHER" id="PTHR47545">
    <property type="entry name" value="MULTIFUNCTIONAL CCA PROTEIN"/>
    <property type="match status" value="1"/>
</dbReference>
<dbReference type="PANTHER" id="PTHR47545:SF1">
    <property type="entry name" value="MULTIFUNCTIONAL CCA PROTEIN"/>
    <property type="match status" value="1"/>
</dbReference>
<dbReference type="Pfam" id="PF01966">
    <property type="entry name" value="HD"/>
    <property type="match status" value="1"/>
</dbReference>
<dbReference type="Pfam" id="PF01743">
    <property type="entry name" value="PolyA_pol"/>
    <property type="match status" value="1"/>
</dbReference>
<dbReference type="Pfam" id="PF12627">
    <property type="entry name" value="PolyA_pol_RNAbd"/>
    <property type="match status" value="1"/>
</dbReference>
<dbReference type="PIRSF" id="PIRSF000813">
    <property type="entry name" value="CCA_bact"/>
    <property type="match status" value="1"/>
</dbReference>
<dbReference type="SUPFAM" id="SSF81301">
    <property type="entry name" value="Nucleotidyltransferase"/>
    <property type="match status" value="1"/>
</dbReference>
<dbReference type="SUPFAM" id="SSF81891">
    <property type="entry name" value="Poly A polymerase C-terminal region-like"/>
    <property type="match status" value="1"/>
</dbReference>
<dbReference type="PROSITE" id="PS51831">
    <property type="entry name" value="HD"/>
    <property type="match status" value="1"/>
</dbReference>
<accession>Q477X0</accession>
<protein>
    <recommendedName>
        <fullName evidence="1">Multifunctional CCA protein</fullName>
    </recommendedName>
    <domain>
        <recommendedName>
            <fullName evidence="1">CCA-adding enzyme</fullName>
            <ecNumber evidence="1">2.7.7.72</ecNumber>
        </recommendedName>
        <alternativeName>
            <fullName evidence="1">CCA tRNA nucleotidyltransferase</fullName>
        </alternativeName>
        <alternativeName>
            <fullName evidence="1">tRNA CCA-pyrophosphorylase</fullName>
        </alternativeName>
        <alternativeName>
            <fullName evidence="1">tRNA adenylyl-/cytidylyl-transferase</fullName>
        </alternativeName>
        <alternativeName>
            <fullName evidence="1">tRNA nucleotidyltransferase</fullName>
        </alternativeName>
        <alternativeName>
            <fullName evidence="1">tRNA-NT</fullName>
        </alternativeName>
    </domain>
    <domain>
        <recommendedName>
            <fullName evidence="1">2'-nucleotidase</fullName>
            <ecNumber evidence="1">3.1.3.-</ecNumber>
        </recommendedName>
    </domain>
    <domain>
        <recommendedName>
            <fullName evidence="1">2',3'-cyclic phosphodiesterase</fullName>
            <ecNumber evidence="1">3.1.4.-</ecNumber>
        </recommendedName>
    </domain>
    <domain>
        <recommendedName>
            <fullName evidence="1">Phosphatase</fullName>
            <ecNumber evidence="1">3.1.3.-</ecNumber>
        </recommendedName>
    </domain>
</protein>
<reference key="1">
    <citation type="journal article" date="2009" name="BMC Genomics">
        <title>Metabolic analysis of the soil microbe Dechloromonas aromatica str. RCB: indications of a surprisingly complex life-style and cryptic anaerobic pathways for aromatic degradation.</title>
        <authorList>
            <person name="Salinero K.K."/>
            <person name="Keller K."/>
            <person name="Feil W.S."/>
            <person name="Feil H."/>
            <person name="Trong S."/>
            <person name="Di Bartolo G."/>
            <person name="Lapidus A."/>
        </authorList>
    </citation>
    <scope>NUCLEOTIDE SEQUENCE [LARGE SCALE GENOMIC DNA]</scope>
    <source>
        <strain>RCB</strain>
    </source>
</reference>
<gene>
    <name evidence="1" type="primary">cca</name>
    <name type="ordered locus">Daro_4135</name>
</gene>
<sequence length="412" mass="45846">MQIYIVGGAVRDELLGRPNADCDYVVVGATPETMLAQGFRPVGKDFPVFLHPNTHDEYALARTERKTGHGYHGFIFHAAADVTLEEDLARRDLTINAMAKAADGTLVDPFNGQQDLASKTLRHVGPAFAEDPVRILRIARFAARFSDFSVAPETLALMRSMVACGEVDHLVAERVWQELAKGLMEQKPSRMFEVLRDCGALARLLPEVDKLFGVPQRADYHPEIDTGIHTMMVIDQSARRTFTLPVRFAALTHDLGKAETPADILPRHIGHEERSVRLTEQLCARLRVPNDCRDLALLTARYHGNIHRAADLKASTIVTLFEKTDALRRPERFRQLLDACLCDFTGRLGWENRPYDSPQYLLGALAAVASLNAGEIAVACADKTKIPERIHAARVHAIKQLLDNPGEQPEQQ</sequence>
<proteinExistence type="inferred from homology"/>
<feature type="chain" id="PRO_1000054261" description="Multifunctional CCA protein">
    <location>
        <begin position="1"/>
        <end position="412"/>
    </location>
</feature>
<feature type="domain" description="HD" evidence="1">
    <location>
        <begin position="226"/>
        <end position="327"/>
    </location>
</feature>
<feature type="binding site" evidence="1">
    <location>
        <position position="8"/>
    </location>
    <ligand>
        <name>ATP</name>
        <dbReference type="ChEBI" id="CHEBI:30616"/>
    </ligand>
</feature>
<feature type="binding site" evidence="1">
    <location>
        <position position="8"/>
    </location>
    <ligand>
        <name>CTP</name>
        <dbReference type="ChEBI" id="CHEBI:37563"/>
    </ligand>
</feature>
<feature type="binding site" evidence="1">
    <location>
        <position position="11"/>
    </location>
    <ligand>
        <name>ATP</name>
        <dbReference type="ChEBI" id="CHEBI:30616"/>
    </ligand>
</feature>
<feature type="binding site" evidence="1">
    <location>
        <position position="11"/>
    </location>
    <ligand>
        <name>CTP</name>
        <dbReference type="ChEBI" id="CHEBI:37563"/>
    </ligand>
</feature>
<feature type="binding site" evidence="1">
    <location>
        <position position="21"/>
    </location>
    <ligand>
        <name>Mg(2+)</name>
        <dbReference type="ChEBI" id="CHEBI:18420"/>
    </ligand>
</feature>
<feature type="binding site" evidence="1">
    <location>
        <position position="23"/>
    </location>
    <ligand>
        <name>Mg(2+)</name>
        <dbReference type="ChEBI" id="CHEBI:18420"/>
    </ligand>
</feature>
<feature type="binding site" evidence="1">
    <location>
        <position position="91"/>
    </location>
    <ligand>
        <name>ATP</name>
        <dbReference type="ChEBI" id="CHEBI:30616"/>
    </ligand>
</feature>
<feature type="binding site" evidence="1">
    <location>
        <position position="91"/>
    </location>
    <ligand>
        <name>CTP</name>
        <dbReference type="ChEBI" id="CHEBI:37563"/>
    </ligand>
</feature>
<feature type="binding site" evidence="1">
    <location>
        <position position="137"/>
    </location>
    <ligand>
        <name>ATP</name>
        <dbReference type="ChEBI" id="CHEBI:30616"/>
    </ligand>
</feature>
<feature type="binding site" evidence="1">
    <location>
        <position position="137"/>
    </location>
    <ligand>
        <name>CTP</name>
        <dbReference type="ChEBI" id="CHEBI:37563"/>
    </ligand>
</feature>
<feature type="binding site" evidence="1">
    <location>
        <position position="140"/>
    </location>
    <ligand>
        <name>ATP</name>
        <dbReference type="ChEBI" id="CHEBI:30616"/>
    </ligand>
</feature>
<feature type="binding site" evidence="1">
    <location>
        <position position="140"/>
    </location>
    <ligand>
        <name>CTP</name>
        <dbReference type="ChEBI" id="CHEBI:37563"/>
    </ligand>
</feature>
<evidence type="ECO:0000255" key="1">
    <source>
        <dbReference type="HAMAP-Rule" id="MF_01261"/>
    </source>
</evidence>
<comment type="function">
    <text evidence="1">Catalyzes the addition and repair of the essential 3'-terminal CCA sequence in tRNAs without using a nucleic acid template. Adds these three nucleotides in the order of C, C, and A to the tRNA nucleotide-73, using CTP and ATP as substrates and producing inorganic pyrophosphate. tRNA 3'-terminal CCA addition is required both for tRNA processing and repair. Also involved in tRNA surveillance by mediating tandem CCA addition to generate a CCACCA at the 3' terminus of unstable tRNAs. While stable tRNAs receive only 3'-terminal CCA, unstable tRNAs are marked with CCACCA and rapidly degraded.</text>
</comment>
<comment type="catalytic activity">
    <reaction evidence="1">
        <text>a tRNA precursor + 2 CTP + ATP = a tRNA with a 3' CCA end + 3 diphosphate</text>
        <dbReference type="Rhea" id="RHEA:14433"/>
        <dbReference type="Rhea" id="RHEA-COMP:10465"/>
        <dbReference type="Rhea" id="RHEA-COMP:10468"/>
        <dbReference type="ChEBI" id="CHEBI:30616"/>
        <dbReference type="ChEBI" id="CHEBI:33019"/>
        <dbReference type="ChEBI" id="CHEBI:37563"/>
        <dbReference type="ChEBI" id="CHEBI:74896"/>
        <dbReference type="ChEBI" id="CHEBI:83071"/>
        <dbReference type="EC" id="2.7.7.72"/>
    </reaction>
</comment>
<comment type="catalytic activity">
    <reaction evidence="1">
        <text>a tRNA with a 3' CCA end + 2 CTP + ATP = a tRNA with a 3' CCACCA end + 3 diphosphate</text>
        <dbReference type="Rhea" id="RHEA:76235"/>
        <dbReference type="Rhea" id="RHEA-COMP:10468"/>
        <dbReference type="Rhea" id="RHEA-COMP:18655"/>
        <dbReference type="ChEBI" id="CHEBI:30616"/>
        <dbReference type="ChEBI" id="CHEBI:33019"/>
        <dbReference type="ChEBI" id="CHEBI:37563"/>
        <dbReference type="ChEBI" id="CHEBI:83071"/>
        <dbReference type="ChEBI" id="CHEBI:195187"/>
    </reaction>
    <physiologicalReaction direction="left-to-right" evidence="1">
        <dbReference type="Rhea" id="RHEA:76236"/>
    </physiologicalReaction>
</comment>
<comment type="cofactor">
    <cofactor evidence="1">
        <name>Mg(2+)</name>
        <dbReference type="ChEBI" id="CHEBI:18420"/>
    </cofactor>
    <text evidence="1">Magnesium is required for nucleotidyltransferase activity.</text>
</comment>
<comment type="cofactor">
    <cofactor evidence="1">
        <name>Ni(2+)</name>
        <dbReference type="ChEBI" id="CHEBI:49786"/>
    </cofactor>
    <text evidence="1">Nickel for phosphatase activity.</text>
</comment>
<comment type="subunit">
    <text evidence="1">Monomer. Can also form homodimers and oligomers.</text>
</comment>
<comment type="domain">
    <text evidence="1">Comprises two domains: an N-terminal domain containing the nucleotidyltransferase activity and a C-terminal HD domain associated with both phosphodiesterase and phosphatase activities.</text>
</comment>
<comment type="miscellaneous">
    <text evidence="1">A single active site specifically recognizes both ATP and CTP and is responsible for their addition.</text>
</comment>
<comment type="similarity">
    <text evidence="1">Belongs to the tRNA nucleotidyltransferase/poly(A) polymerase family. Bacterial CCA-adding enzyme type 1 subfamily.</text>
</comment>
<keyword id="KW-0067">ATP-binding</keyword>
<keyword id="KW-0378">Hydrolase</keyword>
<keyword id="KW-0460">Magnesium</keyword>
<keyword id="KW-0479">Metal-binding</keyword>
<keyword id="KW-0511">Multifunctional enzyme</keyword>
<keyword id="KW-0533">Nickel</keyword>
<keyword id="KW-0547">Nucleotide-binding</keyword>
<keyword id="KW-0548">Nucleotidyltransferase</keyword>
<keyword id="KW-0692">RNA repair</keyword>
<keyword id="KW-0694">RNA-binding</keyword>
<keyword id="KW-0808">Transferase</keyword>
<keyword id="KW-0819">tRNA processing</keyword>
<organism>
    <name type="scientific">Dechloromonas aromatica (strain RCB)</name>
    <dbReference type="NCBI Taxonomy" id="159087"/>
    <lineage>
        <taxon>Bacteria</taxon>
        <taxon>Pseudomonadati</taxon>
        <taxon>Pseudomonadota</taxon>
        <taxon>Betaproteobacteria</taxon>
        <taxon>Rhodocyclales</taxon>
        <taxon>Azonexaceae</taxon>
        <taxon>Dechloromonas</taxon>
    </lineage>
</organism>
<name>CCA_DECAR</name>